<proteinExistence type="evidence at protein level"/>
<keyword id="KW-0256">Endoplasmic reticulum</keyword>
<keyword id="KW-0325">Glycoprotein</keyword>
<keyword id="KW-0328">Glycosyltransferase</keyword>
<keyword id="KW-1185">Reference proteome</keyword>
<keyword id="KW-0732">Signal</keyword>
<keyword id="KW-0808">Transferase</keyword>
<dbReference type="EC" id="2.4.1.-" evidence="1"/>
<dbReference type="EC" id="2.4.2.-" evidence="1"/>
<dbReference type="EMBL" id="AC079869">
    <property type="status" value="NOT_ANNOTATED_CDS"/>
    <property type="molecule type" value="Genomic_DNA"/>
</dbReference>
<dbReference type="EMBL" id="CH466522">
    <property type="protein sequence ID" value="EDL25792.1"/>
    <property type="molecule type" value="Genomic_DNA"/>
</dbReference>
<dbReference type="EMBL" id="AK075811">
    <property type="protein sequence ID" value="BAC35979.1"/>
    <property type="molecule type" value="mRNA"/>
</dbReference>
<dbReference type="CCDS" id="CCDS23182.1"/>
<dbReference type="RefSeq" id="NP_997610.1">
    <property type="nucleotide sequence ID" value="NM_212445.2"/>
</dbReference>
<dbReference type="SMR" id="G5E897"/>
<dbReference type="FunCoup" id="G5E897">
    <property type="interactions" value="745"/>
</dbReference>
<dbReference type="STRING" id="10090.ENSMUSP00000039313"/>
<dbReference type="GlyConnect" id="2637">
    <property type="glycosylation" value="1 N-Linked glycan (1 site)"/>
</dbReference>
<dbReference type="GlyCosmos" id="G5E897">
    <property type="glycosylation" value="2 sites, 1 glycan"/>
</dbReference>
<dbReference type="GlyGen" id="G5E897">
    <property type="glycosylation" value="3 sites, 3 N-linked glycans (3 sites)"/>
</dbReference>
<dbReference type="iPTMnet" id="G5E897"/>
<dbReference type="PhosphoSitePlus" id="G5E897"/>
<dbReference type="SwissPalm" id="G5E897"/>
<dbReference type="PaxDb" id="10090-ENSMUSP00000039313"/>
<dbReference type="PeptideAtlas" id="G5E897"/>
<dbReference type="ProteomicsDB" id="338485"/>
<dbReference type="Pumba" id="G5E897"/>
<dbReference type="Antibodypedia" id="50833">
    <property type="antibodies" value="57 antibodies from 16 providers"/>
</dbReference>
<dbReference type="DNASU" id="68304"/>
<dbReference type="Ensembl" id="ENSMUST00000037853.5">
    <property type="protein sequence ID" value="ENSMUSP00000039313.4"/>
    <property type="gene ID" value="ENSMUSG00000034487.5"/>
</dbReference>
<dbReference type="GeneID" id="68304"/>
<dbReference type="KEGG" id="mmu:68304"/>
<dbReference type="UCSC" id="uc009pmb.1">
    <property type="organism name" value="mouse"/>
</dbReference>
<dbReference type="AGR" id="MGI:1923765"/>
<dbReference type="CTD" id="143888"/>
<dbReference type="MGI" id="MGI:1923765">
    <property type="gene designation" value="Poglut3"/>
</dbReference>
<dbReference type="VEuPathDB" id="HostDB:ENSMUSG00000034487"/>
<dbReference type="eggNOG" id="KOG2458">
    <property type="taxonomic scope" value="Eukaryota"/>
</dbReference>
<dbReference type="GeneTree" id="ENSGT00940000159028"/>
<dbReference type="HOGENOM" id="CLU_041919_0_0_1"/>
<dbReference type="InParanoid" id="G5E897"/>
<dbReference type="OMA" id="GITAWFF"/>
<dbReference type="OrthoDB" id="541052at2759"/>
<dbReference type="PhylomeDB" id="G5E897"/>
<dbReference type="TreeFam" id="TF323280"/>
<dbReference type="UniPathway" id="UPA00378"/>
<dbReference type="BioGRID-ORCS" id="68304">
    <property type="hits" value="3 hits in 78 CRISPR screens"/>
</dbReference>
<dbReference type="ChiTaRS" id="Poglut3">
    <property type="organism name" value="mouse"/>
</dbReference>
<dbReference type="PRO" id="PR:G5E897"/>
<dbReference type="Proteomes" id="UP000000589">
    <property type="component" value="Chromosome 9"/>
</dbReference>
<dbReference type="RNAct" id="G5E897">
    <property type="molecule type" value="protein"/>
</dbReference>
<dbReference type="Bgee" id="ENSMUSG00000034487">
    <property type="expression patterns" value="Expressed in ascending aorta and 193 other cell types or tissues"/>
</dbReference>
<dbReference type="ExpressionAtlas" id="G5E897">
    <property type="expression patterns" value="baseline and differential"/>
</dbReference>
<dbReference type="GO" id="GO:0005788">
    <property type="term" value="C:endoplasmic reticulum lumen"/>
    <property type="evidence" value="ECO:0007669"/>
    <property type="project" value="UniProtKB-SubCell"/>
</dbReference>
<dbReference type="GO" id="GO:0140561">
    <property type="term" value="F:EGF-domain serine glucosyltransferase activity"/>
    <property type="evidence" value="ECO:0007669"/>
    <property type="project" value="RHEA"/>
</dbReference>
<dbReference type="GO" id="GO:0140562">
    <property type="term" value="F:EGF-domain serine xylosyltransferase activity"/>
    <property type="evidence" value="ECO:0007669"/>
    <property type="project" value="RHEA"/>
</dbReference>
<dbReference type="GO" id="GO:0035251">
    <property type="term" value="F:UDP-glucosyltransferase activity"/>
    <property type="evidence" value="ECO:0000250"/>
    <property type="project" value="UniProtKB"/>
</dbReference>
<dbReference type="GO" id="GO:0035252">
    <property type="term" value="F:UDP-xylosyltransferase activity"/>
    <property type="evidence" value="ECO:0000250"/>
    <property type="project" value="UniProtKB"/>
</dbReference>
<dbReference type="GO" id="GO:0018242">
    <property type="term" value="P:protein O-linked glycosylation via serine"/>
    <property type="evidence" value="ECO:0000250"/>
    <property type="project" value="UniProtKB"/>
</dbReference>
<dbReference type="FunFam" id="2.60.40.10:FF:000419">
    <property type="entry name" value="KDEL (Lys-Asp-Glu-Leu) containing 1"/>
    <property type="match status" value="1"/>
</dbReference>
<dbReference type="Gene3D" id="2.60.40.10">
    <property type="entry name" value="Immunoglobulins"/>
    <property type="match status" value="1"/>
</dbReference>
<dbReference type="InterPro" id="IPR006598">
    <property type="entry name" value="CAP10"/>
</dbReference>
<dbReference type="InterPro" id="IPR017868">
    <property type="entry name" value="Filamin/ABP280_repeat-like"/>
</dbReference>
<dbReference type="InterPro" id="IPR013783">
    <property type="entry name" value="Ig-like_fold"/>
</dbReference>
<dbReference type="InterPro" id="IPR014756">
    <property type="entry name" value="Ig_E-set"/>
</dbReference>
<dbReference type="InterPro" id="IPR051091">
    <property type="entry name" value="O-Glucosyltr/Glycosyltrsf_90"/>
</dbReference>
<dbReference type="PANTHER" id="PTHR12203">
    <property type="entry name" value="KDEL LYS-ASP-GLU-LEU CONTAINING - RELATED"/>
    <property type="match status" value="1"/>
</dbReference>
<dbReference type="PANTHER" id="PTHR12203:SF18">
    <property type="entry name" value="PROTEIN O-GLUCOSYLTRANSFERASE 3"/>
    <property type="match status" value="1"/>
</dbReference>
<dbReference type="Pfam" id="PF00630">
    <property type="entry name" value="Filamin"/>
    <property type="match status" value="1"/>
</dbReference>
<dbReference type="Pfam" id="PF05686">
    <property type="entry name" value="Glyco_transf_90"/>
    <property type="match status" value="1"/>
</dbReference>
<dbReference type="SMART" id="SM00672">
    <property type="entry name" value="CAP10"/>
    <property type="match status" value="1"/>
</dbReference>
<dbReference type="SUPFAM" id="SSF81296">
    <property type="entry name" value="E set domains"/>
    <property type="match status" value="1"/>
</dbReference>
<dbReference type="PROSITE" id="PS00014">
    <property type="entry name" value="ER_TARGET"/>
    <property type="match status" value="1"/>
</dbReference>
<dbReference type="PROSITE" id="PS50194">
    <property type="entry name" value="FILAMIN_REPEAT"/>
    <property type="match status" value="1"/>
</dbReference>
<reference key="1">
    <citation type="journal article" date="2009" name="PLoS Biol.">
        <title>Lineage-specific biology revealed by a finished genome assembly of the mouse.</title>
        <authorList>
            <person name="Church D.M."/>
            <person name="Goodstadt L."/>
            <person name="Hillier L.W."/>
            <person name="Zody M.C."/>
            <person name="Goldstein S."/>
            <person name="She X."/>
            <person name="Bult C.J."/>
            <person name="Agarwala R."/>
            <person name="Cherry J.L."/>
            <person name="DiCuccio M."/>
            <person name="Hlavina W."/>
            <person name="Kapustin Y."/>
            <person name="Meric P."/>
            <person name="Maglott D."/>
            <person name="Birtle Z."/>
            <person name="Marques A.C."/>
            <person name="Graves T."/>
            <person name="Zhou S."/>
            <person name="Teague B."/>
            <person name="Potamousis K."/>
            <person name="Churas C."/>
            <person name="Place M."/>
            <person name="Herschleb J."/>
            <person name="Runnheim R."/>
            <person name="Forrest D."/>
            <person name="Amos-Landgraf J."/>
            <person name="Schwartz D.C."/>
            <person name="Cheng Z."/>
            <person name="Lindblad-Toh K."/>
            <person name="Eichler E.E."/>
            <person name="Ponting C.P."/>
        </authorList>
    </citation>
    <scope>NUCLEOTIDE SEQUENCE [LARGE SCALE GENOMIC DNA]</scope>
    <source>
        <strain>C57BL/6J</strain>
    </source>
</reference>
<reference key="2">
    <citation type="submission" date="2005-07" db="EMBL/GenBank/DDBJ databases">
        <authorList>
            <person name="Mural R.J."/>
            <person name="Adams M.D."/>
            <person name="Myers E.W."/>
            <person name="Smith H.O."/>
            <person name="Venter J.C."/>
        </authorList>
    </citation>
    <scope>NUCLEOTIDE SEQUENCE [LARGE SCALE GENOMIC DNA]</scope>
</reference>
<reference key="3">
    <citation type="journal article" date="2005" name="Science">
        <title>The transcriptional landscape of the mammalian genome.</title>
        <authorList>
            <person name="Carninci P."/>
            <person name="Kasukawa T."/>
            <person name="Katayama S."/>
            <person name="Gough J."/>
            <person name="Frith M.C."/>
            <person name="Maeda N."/>
            <person name="Oyama R."/>
            <person name="Ravasi T."/>
            <person name="Lenhard B."/>
            <person name="Wells C."/>
            <person name="Kodzius R."/>
            <person name="Shimokawa K."/>
            <person name="Bajic V.B."/>
            <person name="Brenner S.E."/>
            <person name="Batalov S."/>
            <person name="Forrest A.R."/>
            <person name="Zavolan M."/>
            <person name="Davis M.J."/>
            <person name="Wilming L.G."/>
            <person name="Aidinis V."/>
            <person name="Allen J.E."/>
            <person name="Ambesi-Impiombato A."/>
            <person name="Apweiler R."/>
            <person name="Aturaliya R.N."/>
            <person name="Bailey T.L."/>
            <person name="Bansal M."/>
            <person name="Baxter L."/>
            <person name="Beisel K.W."/>
            <person name="Bersano T."/>
            <person name="Bono H."/>
            <person name="Chalk A.M."/>
            <person name="Chiu K.P."/>
            <person name="Choudhary V."/>
            <person name="Christoffels A."/>
            <person name="Clutterbuck D.R."/>
            <person name="Crowe M.L."/>
            <person name="Dalla E."/>
            <person name="Dalrymple B.P."/>
            <person name="de Bono B."/>
            <person name="Della Gatta G."/>
            <person name="di Bernardo D."/>
            <person name="Down T."/>
            <person name="Engstrom P."/>
            <person name="Fagiolini M."/>
            <person name="Faulkner G."/>
            <person name="Fletcher C.F."/>
            <person name="Fukushima T."/>
            <person name="Furuno M."/>
            <person name="Futaki S."/>
            <person name="Gariboldi M."/>
            <person name="Georgii-Hemming P."/>
            <person name="Gingeras T.R."/>
            <person name="Gojobori T."/>
            <person name="Green R.E."/>
            <person name="Gustincich S."/>
            <person name="Harbers M."/>
            <person name="Hayashi Y."/>
            <person name="Hensch T.K."/>
            <person name="Hirokawa N."/>
            <person name="Hill D."/>
            <person name="Huminiecki L."/>
            <person name="Iacono M."/>
            <person name="Ikeo K."/>
            <person name="Iwama A."/>
            <person name="Ishikawa T."/>
            <person name="Jakt M."/>
            <person name="Kanapin A."/>
            <person name="Katoh M."/>
            <person name="Kawasawa Y."/>
            <person name="Kelso J."/>
            <person name="Kitamura H."/>
            <person name="Kitano H."/>
            <person name="Kollias G."/>
            <person name="Krishnan S.P."/>
            <person name="Kruger A."/>
            <person name="Kummerfeld S.K."/>
            <person name="Kurochkin I.V."/>
            <person name="Lareau L.F."/>
            <person name="Lazarevic D."/>
            <person name="Lipovich L."/>
            <person name="Liu J."/>
            <person name="Liuni S."/>
            <person name="McWilliam S."/>
            <person name="Madan Babu M."/>
            <person name="Madera M."/>
            <person name="Marchionni L."/>
            <person name="Matsuda H."/>
            <person name="Matsuzawa S."/>
            <person name="Miki H."/>
            <person name="Mignone F."/>
            <person name="Miyake S."/>
            <person name="Morris K."/>
            <person name="Mottagui-Tabar S."/>
            <person name="Mulder N."/>
            <person name="Nakano N."/>
            <person name="Nakauchi H."/>
            <person name="Ng P."/>
            <person name="Nilsson R."/>
            <person name="Nishiguchi S."/>
            <person name="Nishikawa S."/>
            <person name="Nori F."/>
            <person name="Ohara O."/>
            <person name="Okazaki Y."/>
            <person name="Orlando V."/>
            <person name="Pang K.C."/>
            <person name="Pavan W.J."/>
            <person name="Pavesi G."/>
            <person name="Pesole G."/>
            <person name="Petrovsky N."/>
            <person name="Piazza S."/>
            <person name="Reed J."/>
            <person name="Reid J.F."/>
            <person name="Ring B.Z."/>
            <person name="Ringwald M."/>
            <person name="Rost B."/>
            <person name="Ruan Y."/>
            <person name="Salzberg S.L."/>
            <person name="Sandelin A."/>
            <person name="Schneider C."/>
            <person name="Schoenbach C."/>
            <person name="Sekiguchi K."/>
            <person name="Semple C.A."/>
            <person name="Seno S."/>
            <person name="Sessa L."/>
            <person name="Sheng Y."/>
            <person name="Shibata Y."/>
            <person name="Shimada H."/>
            <person name="Shimada K."/>
            <person name="Silva D."/>
            <person name="Sinclair B."/>
            <person name="Sperling S."/>
            <person name="Stupka E."/>
            <person name="Sugiura K."/>
            <person name="Sultana R."/>
            <person name="Takenaka Y."/>
            <person name="Taki K."/>
            <person name="Tammoja K."/>
            <person name="Tan S.L."/>
            <person name="Tang S."/>
            <person name="Taylor M.S."/>
            <person name="Tegner J."/>
            <person name="Teichmann S.A."/>
            <person name="Ueda H.R."/>
            <person name="van Nimwegen E."/>
            <person name="Verardo R."/>
            <person name="Wei C.L."/>
            <person name="Yagi K."/>
            <person name="Yamanishi H."/>
            <person name="Zabarovsky E."/>
            <person name="Zhu S."/>
            <person name="Zimmer A."/>
            <person name="Hide W."/>
            <person name="Bult C."/>
            <person name="Grimmond S.M."/>
            <person name="Teasdale R.D."/>
            <person name="Liu E.T."/>
            <person name="Brusic V."/>
            <person name="Quackenbush J."/>
            <person name="Wahlestedt C."/>
            <person name="Mattick J.S."/>
            <person name="Hume D.A."/>
            <person name="Kai C."/>
            <person name="Sasaki D."/>
            <person name="Tomaru Y."/>
            <person name="Fukuda S."/>
            <person name="Kanamori-Katayama M."/>
            <person name="Suzuki M."/>
            <person name="Aoki J."/>
            <person name="Arakawa T."/>
            <person name="Iida J."/>
            <person name="Imamura K."/>
            <person name="Itoh M."/>
            <person name="Kato T."/>
            <person name="Kawaji H."/>
            <person name="Kawagashira N."/>
            <person name="Kawashima T."/>
            <person name="Kojima M."/>
            <person name="Kondo S."/>
            <person name="Konno H."/>
            <person name="Nakano K."/>
            <person name="Ninomiya N."/>
            <person name="Nishio T."/>
            <person name="Okada M."/>
            <person name="Plessy C."/>
            <person name="Shibata K."/>
            <person name="Shiraki T."/>
            <person name="Suzuki S."/>
            <person name="Tagami M."/>
            <person name="Waki K."/>
            <person name="Watahiki A."/>
            <person name="Okamura-Oho Y."/>
            <person name="Suzuki H."/>
            <person name="Kawai J."/>
            <person name="Hayashizaki Y."/>
        </authorList>
    </citation>
    <scope>NUCLEOTIDE SEQUENCE [LARGE SCALE MRNA] OF 39-503</scope>
    <source>
        <strain>C57BL/6J</strain>
        <tissue>Small intestine</tissue>
    </source>
</reference>
<reference key="4">
    <citation type="journal article" date="2010" name="Cell">
        <title>A tissue-specific atlas of mouse protein phosphorylation and expression.</title>
        <authorList>
            <person name="Huttlin E.L."/>
            <person name="Jedrychowski M.P."/>
            <person name="Elias J.E."/>
            <person name="Goswami T."/>
            <person name="Rad R."/>
            <person name="Beausoleil S.A."/>
            <person name="Villen J."/>
            <person name="Haas W."/>
            <person name="Sowa M.E."/>
            <person name="Gygi S.P."/>
        </authorList>
    </citation>
    <scope>IDENTIFICATION BY MASS SPECTROMETRY [LARGE SCALE ANALYSIS]</scope>
</reference>
<evidence type="ECO:0000250" key="1">
    <source>
        <dbReference type="UniProtKB" id="Q7Z4H8"/>
    </source>
</evidence>
<evidence type="ECO:0000255" key="2"/>
<evidence type="ECO:0000255" key="3">
    <source>
        <dbReference type="PROSITE-ProRule" id="PRU00087"/>
    </source>
</evidence>
<evidence type="ECO:0000255" key="4">
    <source>
        <dbReference type="PROSITE-ProRule" id="PRU10138"/>
    </source>
</evidence>
<evidence type="ECO:0000305" key="5"/>
<evidence type="ECO:0000312" key="6">
    <source>
        <dbReference type="MGI" id="MGI:1923765"/>
    </source>
</evidence>
<organism>
    <name type="scientific">Mus musculus</name>
    <name type="common">Mouse</name>
    <dbReference type="NCBI Taxonomy" id="10090"/>
    <lineage>
        <taxon>Eukaryota</taxon>
        <taxon>Metazoa</taxon>
        <taxon>Chordata</taxon>
        <taxon>Craniata</taxon>
        <taxon>Vertebrata</taxon>
        <taxon>Euteleostomi</taxon>
        <taxon>Mammalia</taxon>
        <taxon>Eutheria</taxon>
        <taxon>Euarchontoglires</taxon>
        <taxon>Glires</taxon>
        <taxon>Rodentia</taxon>
        <taxon>Myomorpha</taxon>
        <taxon>Muroidea</taxon>
        <taxon>Muridae</taxon>
        <taxon>Murinae</taxon>
        <taxon>Mus</taxon>
        <taxon>Mus</taxon>
    </lineage>
</organism>
<gene>
    <name type="primary">Poglut3</name>
    <name evidence="6" type="synonym">Kdelc2</name>
</gene>
<comment type="function">
    <text evidence="1">Protein glucosyltransferase that catalyzes the transfer of glucose from UDP-glucose to a serine residue within the consensus sequence peptide C-X-N-T-X-G-S-F-X-C. Can also catalyze the transfer of xylose from UDP-xylose but less efficiently. Specifically targets extracellular EGF repeats of proteins such as NOTCH1, NOTCH3, FBN1, FBN2 and LTBP1. May regulate the transport of NOTCH1 and NOTCH3 to the plasma membrane and thereby the Notch signaling pathway.</text>
</comment>
<comment type="catalytic activity">
    <reaction evidence="1">
        <text>L-seryl-[EGF-like domain protein] + UDP-alpha-D-glucose = 3-O-(beta-D-glucosyl)-L-seryl-[EGF-like domain protein] + UDP + H(+)</text>
        <dbReference type="Rhea" id="RHEA:58116"/>
        <dbReference type="Rhea" id="RHEA-COMP:14610"/>
        <dbReference type="Rhea" id="RHEA-COMP:16010"/>
        <dbReference type="ChEBI" id="CHEBI:15378"/>
        <dbReference type="ChEBI" id="CHEBI:29999"/>
        <dbReference type="ChEBI" id="CHEBI:58223"/>
        <dbReference type="ChEBI" id="CHEBI:58885"/>
        <dbReference type="ChEBI" id="CHEBI:140576"/>
    </reaction>
</comment>
<comment type="catalytic activity">
    <reaction evidence="1">
        <text>L-seryl-[EGF-like domain protein] + UDP-alpha-D-xylose = 3-O-(beta-D-xylosyl)-L-seryl-[EGF-like domain protein] + UDP + H(+)</text>
        <dbReference type="Rhea" id="RHEA:62016"/>
        <dbReference type="Rhea" id="RHEA-COMP:16010"/>
        <dbReference type="Rhea" id="RHEA-COMP:16011"/>
        <dbReference type="ChEBI" id="CHEBI:15378"/>
        <dbReference type="ChEBI" id="CHEBI:29999"/>
        <dbReference type="ChEBI" id="CHEBI:57632"/>
        <dbReference type="ChEBI" id="CHEBI:58223"/>
        <dbReference type="ChEBI" id="CHEBI:132085"/>
    </reaction>
</comment>
<comment type="pathway">
    <text evidence="1">Protein modification; protein glycosylation.</text>
</comment>
<comment type="subcellular location">
    <subcellularLocation>
        <location evidence="4">Endoplasmic reticulum lumen</location>
    </subcellularLocation>
</comment>
<comment type="similarity">
    <text evidence="5">Belongs to the KDELC family.</text>
</comment>
<sequence length="503" mass="57686">MQALPLGLQLALLVAAGAGARVSAPRSLAWGPGLQAAAVLPVRYFFLQSVDSDGRNFTSSPPGQTQFKVVVKSLSPKELVRIYVPKPLDRNDGTFLVRYRMHETAHKGLKIEILHGSEHVAHSPYILKGPVYHEYCDCPEDDPQVWQETLSCPASEPQIEQDFVSFPSINLQQMLKEVPTRFGDERGAVVHYTILNNHIYRRSLGKYTDFKMFSDEILLSLARKVTLPDLEFYINLGDWPLEHRKVNDTPGPIPIISWCGSLDSRDIILPTYDVTHSTLEAMRGVTNDLLSVQGNTGPSWINKTEKAFFRGRDSREERLQLVLLSKENPQLLDAGITGYFFFQEKEKELGKAKLMGFFDFFKYKYQVNVDGTVAAYRYPYLMLGDSLVLKQESPYYEHFYVALKPWKHYVPIKRNLGDLLEKVKWAKENDEEAKKIAKEGQLTARDLLQPPRLYCYYYRVLQKYAERQASKPMIRDGMELVPQPDDGTSICQCHRRRPEREEL</sequence>
<protein>
    <recommendedName>
        <fullName evidence="5">Protein O-glucosyltransferase 3</fullName>
        <ecNumber evidence="1">2.4.1.-</ecNumber>
    </recommendedName>
    <alternativeName>
        <fullName evidence="6">KDEL motif-containing protein 2</fullName>
    </alternativeName>
    <alternativeName>
        <fullName evidence="5">Protein O-xylosyltransferase POGLUT3</fullName>
        <ecNumber evidence="1">2.4.2.-</ecNumber>
    </alternativeName>
</protein>
<name>PLGT3_MOUSE</name>
<feature type="signal peptide" evidence="2">
    <location>
        <begin position="1"/>
        <end position="19"/>
    </location>
</feature>
<feature type="chain" id="PRO_5015091896" description="Protein O-glucosyltransferase 3" evidence="2">
    <location>
        <begin position="20"/>
        <end position="503"/>
    </location>
</feature>
<feature type="repeat" description="Filamin" evidence="3">
    <location>
        <begin position="19"/>
        <end position="129"/>
    </location>
</feature>
<feature type="short sequence motif" description="Prevents secretion from ER" evidence="4">
    <location>
        <begin position="500"/>
        <end position="503"/>
    </location>
</feature>
<feature type="glycosylation site" description="N-linked (GlcNAc...) asparagine" evidence="2">
    <location>
        <position position="56"/>
    </location>
</feature>
<feature type="glycosylation site" description="N-linked (GlcNAc...) asparagine" evidence="2">
    <location>
        <position position="302"/>
    </location>
</feature>
<accession>G5E897</accession>
<accession>Q8C6F3</accession>